<feature type="chain" id="PRO_0000384047" description="Lactate utilization protein A">
    <location>
        <begin position="1"/>
        <end position="245"/>
    </location>
</feature>
<sequence>MPNVALFVTCLSDTLFPSVGQATVELLEHLGCEVTFPFEQTCCGQPAYNSGYHEETKKIAKHMIETFEQADAEYIVGPSGSCVMMMRDYPHLFQDDPVWRPRAEAHAAKTFELTQFIVDVLEVTDVGAKFPAKATYHASCHMTRLLGIEAAPGKLLGNVDGLTMVPLANVHNCCGFGGTFSVKMPDVSVQMVDEKVDSILQSGAEVLIGADASCLMNIGGRLHKQGHPIKVMHIAEVLNEGVKQA</sequence>
<reference key="1">
    <citation type="journal article" date="2011" name="J. Bacteriol.">
        <title>Complete genome sequence of the Thermophilic Bacterium Exiguobacterium sp. AT1b.</title>
        <authorList>
            <person name="Vishnivetskaya T.A."/>
            <person name="Lucas S."/>
            <person name="Copeland A."/>
            <person name="Lapidus A."/>
            <person name="Glavina del Rio T."/>
            <person name="Dalin E."/>
            <person name="Tice H."/>
            <person name="Bruce D.C."/>
            <person name="Goodwin L.A."/>
            <person name="Pitluck S."/>
            <person name="Saunders E."/>
            <person name="Brettin T."/>
            <person name="Detter C."/>
            <person name="Han C."/>
            <person name="Larimer F."/>
            <person name="Land M.L."/>
            <person name="Hauser L.J."/>
            <person name="Kyrpides N.C."/>
            <person name="Ovchinnikova G."/>
            <person name="Kathariou S."/>
            <person name="Ramaley R.F."/>
            <person name="Rodrigues D.F."/>
            <person name="Hendrix C."/>
            <person name="Richardson P."/>
            <person name="Tiedje J.M."/>
        </authorList>
    </citation>
    <scope>NUCLEOTIDE SEQUENCE [LARGE SCALE GENOMIC DNA]</scope>
    <source>
        <strain>ATCC BAA-1283 / AT1b</strain>
    </source>
</reference>
<proteinExistence type="inferred from homology"/>
<dbReference type="EMBL" id="CP001615">
    <property type="protein sequence ID" value="ACQ70885.1"/>
    <property type="molecule type" value="Genomic_DNA"/>
</dbReference>
<dbReference type="RefSeq" id="WP_015880444.1">
    <property type="nucleotide sequence ID" value="NC_012673.1"/>
</dbReference>
<dbReference type="SMR" id="C4L0S2"/>
<dbReference type="STRING" id="360911.EAT1b_1961"/>
<dbReference type="KEGG" id="eat:EAT1b_1961"/>
<dbReference type="eggNOG" id="COG0247">
    <property type="taxonomic scope" value="Bacteria"/>
</dbReference>
<dbReference type="HOGENOM" id="CLU_023081_1_0_9"/>
<dbReference type="OrthoDB" id="9770306at2"/>
<dbReference type="Proteomes" id="UP000000716">
    <property type="component" value="Chromosome"/>
</dbReference>
<dbReference type="GO" id="GO:0005829">
    <property type="term" value="C:cytosol"/>
    <property type="evidence" value="ECO:0007669"/>
    <property type="project" value="TreeGrafter"/>
</dbReference>
<dbReference type="GO" id="GO:0016491">
    <property type="term" value="F:oxidoreductase activity"/>
    <property type="evidence" value="ECO:0007669"/>
    <property type="project" value="UniProtKB-ARBA"/>
</dbReference>
<dbReference type="GO" id="GO:0006089">
    <property type="term" value="P:lactate metabolic process"/>
    <property type="evidence" value="ECO:0007669"/>
    <property type="project" value="UniProtKB-UniRule"/>
</dbReference>
<dbReference type="HAMAP" id="MF_02105">
    <property type="entry name" value="LutA"/>
    <property type="match status" value="1"/>
</dbReference>
<dbReference type="InterPro" id="IPR004017">
    <property type="entry name" value="Cys_rich_dom"/>
</dbReference>
<dbReference type="InterPro" id="IPR022822">
    <property type="entry name" value="LutA"/>
</dbReference>
<dbReference type="PANTHER" id="PTHR30296:SF0">
    <property type="entry name" value="LACTATE UTILIZATION PROTEIN A"/>
    <property type="match status" value="1"/>
</dbReference>
<dbReference type="PANTHER" id="PTHR30296">
    <property type="entry name" value="UNCHARACTERIZED PROTEIN YKGE"/>
    <property type="match status" value="1"/>
</dbReference>
<dbReference type="Pfam" id="PF02754">
    <property type="entry name" value="CCG"/>
    <property type="match status" value="2"/>
</dbReference>
<accession>C4L0S2</accession>
<evidence type="ECO:0000255" key="1">
    <source>
        <dbReference type="HAMAP-Rule" id="MF_02105"/>
    </source>
</evidence>
<comment type="function">
    <text evidence="1">Is involved in L-lactate degradation and allows cells to grow with lactate as the sole carbon source.</text>
</comment>
<comment type="similarity">
    <text evidence="1">Belongs to the LutA/YkgE family.</text>
</comment>
<name>LUTA_EXISA</name>
<protein>
    <recommendedName>
        <fullName evidence="1">Lactate utilization protein A</fullName>
    </recommendedName>
</protein>
<organism>
    <name type="scientific">Exiguobacterium sp. (strain ATCC BAA-1283 / AT1b)</name>
    <dbReference type="NCBI Taxonomy" id="360911"/>
    <lineage>
        <taxon>Bacteria</taxon>
        <taxon>Bacillati</taxon>
        <taxon>Bacillota</taxon>
        <taxon>Bacilli</taxon>
        <taxon>Bacillales</taxon>
        <taxon>Bacillales Family XII. Incertae Sedis</taxon>
        <taxon>Exiguobacterium</taxon>
    </lineage>
</organism>
<gene>
    <name evidence="1" type="primary">lutA</name>
    <name type="ordered locus">EAT1b_1961</name>
</gene>